<gene>
    <name evidence="1" type="primary">dapA</name>
    <name type="ordered locus">USA300HOU_1330</name>
</gene>
<proteinExistence type="inferred from homology"/>
<feature type="chain" id="PRO_1000080543" description="4-hydroxy-tetrahydrodipicolinate synthase">
    <location>
        <begin position="1"/>
        <end position="295"/>
    </location>
</feature>
<feature type="active site" description="Proton donor/acceptor" evidence="1">
    <location>
        <position position="135"/>
    </location>
</feature>
<feature type="active site" description="Schiff-base intermediate with substrate" evidence="1">
    <location>
        <position position="163"/>
    </location>
</feature>
<feature type="binding site" evidence="1">
    <location>
        <position position="47"/>
    </location>
    <ligand>
        <name>pyruvate</name>
        <dbReference type="ChEBI" id="CHEBI:15361"/>
    </ligand>
</feature>
<feature type="binding site" evidence="1">
    <location>
        <position position="206"/>
    </location>
    <ligand>
        <name>pyruvate</name>
        <dbReference type="ChEBI" id="CHEBI:15361"/>
    </ligand>
</feature>
<feature type="site" description="Part of a proton relay during catalysis" evidence="1">
    <location>
        <position position="46"/>
    </location>
</feature>
<feature type="site" description="Part of a proton relay during catalysis" evidence="1">
    <location>
        <position position="109"/>
    </location>
</feature>
<comment type="function">
    <text evidence="1">Catalyzes the condensation of (S)-aspartate-beta-semialdehyde [(S)-ASA] and pyruvate to 4-hydroxy-tetrahydrodipicolinate (HTPA).</text>
</comment>
<comment type="catalytic activity">
    <reaction evidence="1">
        <text>L-aspartate 4-semialdehyde + pyruvate = (2S,4S)-4-hydroxy-2,3,4,5-tetrahydrodipicolinate + H2O + H(+)</text>
        <dbReference type="Rhea" id="RHEA:34171"/>
        <dbReference type="ChEBI" id="CHEBI:15361"/>
        <dbReference type="ChEBI" id="CHEBI:15377"/>
        <dbReference type="ChEBI" id="CHEBI:15378"/>
        <dbReference type="ChEBI" id="CHEBI:67139"/>
        <dbReference type="ChEBI" id="CHEBI:537519"/>
        <dbReference type="EC" id="4.3.3.7"/>
    </reaction>
</comment>
<comment type="pathway">
    <text evidence="1">Amino-acid biosynthesis; L-lysine biosynthesis via DAP pathway; (S)-tetrahydrodipicolinate from L-aspartate: step 3/4.</text>
</comment>
<comment type="subunit">
    <text evidence="1">Homodimer.</text>
</comment>
<comment type="subcellular location">
    <subcellularLocation>
        <location evidence="1">Cytoplasm</location>
    </subcellularLocation>
</comment>
<comment type="similarity">
    <text evidence="1">Belongs to the DapA family.</text>
</comment>
<comment type="caution">
    <text evidence="2">Was originally thought to be a dihydrodipicolinate synthase (DHDPS), catalyzing the condensation of (S)-aspartate-beta-semialdehyde [(S)-ASA] and pyruvate to dihydrodipicolinate (DHDP). However, it was shown in E.coli that the product of the enzymatic reaction is not dihydrodipicolinate but in fact (4S)-4-hydroxy-2,3,4,5-tetrahydro-(2S)-dipicolinic acid (HTPA), and that the consecutive dehydration reaction leading to DHDP is not spontaneous but catalyzed by DapB.</text>
</comment>
<reference key="1">
    <citation type="journal article" date="2007" name="BMC Microbiol.">
        <title>Subtle genetic changes enhance virulence of methicillin resistant and sensitive Staphylococcus aureus.</title>
        <authorList>
            <person name="Highlander S.K."/>
            <person name="Hulten K.G."/>
            <person name="Qin X."/>
            <person name="Jiang H."/>
            <person name="Yerrapragada S."/>
            <person name="Mason E.O. Jr."/>
            <person name="Shang Y."/>
            <person name="Williams T.M."/>
            <person name="Fortunov R.M."/>
            <person name="Liu Y."/>
            <person name="Igboeli O."/>
            <person name="Petrosino J."/>
            <person name="Tirumalai M."/>
            <person name="Uzman A."/>
            <person name="Fox G.E."/>
            <person name="Cardenas A.M."/>
            <person name="Muzny D.M."/>
            <person name="Hemphill L."/>
            <person name="Ding Y."/>
            <person name="Dugan S."/>
            <person name="Blyth P.R."/>
            <person name="Buhay C.J."/>
            <person name="Dinh H.H."/>
            <person name="Hawes A.C."/>
            <person name="Holder M."/>
            <person name="Kovar C.L."/>
            <person name="Lee S.L."/>
            <person name="Liu W."/>
            <person name="Nazareth L.V."/>
            <person name="Wang Q."/>
            <person name="Zhou J."/>
            <person name="Kaplan S.L."/>
            <person name="Weinstock G.M."/>
        </authorList>
    </citation>
    <scope>NUCLEOTIDE SEQUENCE [LARGE SCALE GENOMIC DNA]</scope>
    <source>
        <strain>USA300 / TCH1516</strain>
    </source>
</reference>
<accession>A8Z3X3</accession>
<protein>
    <recommendedName>
        <fullName evidence="1">4-hydroxy-tetrahydrodipicolinate synthase</fullName>
        <shortName evidence="1">HTPA synthase</shortName>
        <ecNumber evidence="1">4.3.3.7</ecNumber>
    </recommendedName>
</protein>
<dbReference type="EC" id="4.3.3.7" evidence="1"/>
<dbReference type="EMBL" id="CP000730">
    <property type="protein sequence ID" value="ABX29341.1"/>
    <property type="molecule type" value="Genomic_DNA"/>
</dbReference>
<dbReference type="RefSeq" id="WP_000149257.1">
    <property type="nucleotide sequence ID" value="NC_010079.1"/>
</dbReference>
<dbReference type="SMR" id="A8Z3X3"/>
<dbReference type="KEGG" id="sax:USA300HOU_1330"/>
<dbReference type="HOGENOM" id="CLU_049343_7_0_9"/>
<dbReference type="UniPathway" id="UPA00034">
    <property type="reaction ID" value="UER00017"/>
</dbReference>
<dbReference type="GO" id="GO:0005829">
    <property type="term" value="C:cytosol"/>
    <property type="evidence" value="ECO:0007669"/>
    <property type="project" value="TreeGrafter"/>
</dbReference>
<dbReference type="GO" id="GO:0008840">
    <property type="term" value="F:4-hydroxy-tetrahydrodipicolinate synthase activity"/>
    <property type="evidence" value="ECO:0007669"/>
    <property type="project" value="UniProtKB-UniRule"/>
</dbReference>
<dbReference type="GO" id="GO:0019877">
    <property type="term" value="P:diaminopimelate biosynthetic process"/>
    <property type="evidence" value="ECO:0007669"/>
    <property type="project" value="UniProtKB-UniRule"/>
</dbReference>
<dbReference type="GO" id="GO:0009089">
    <property type="term" value="P:lysine biosynthetic process via diaminopimelate"/>
    <property type="evidence" value="ECO:0007669"/>
    <property type="project" value="UniProtKB-UniRule"/>
</dbReference>
<dbReference type="CDD" id="cd00950">
    <property type="entry name" value="DHDPS"/>
    <property type="match status" value="1"/>
</dbReference>
<dbReference type="Gene3D" id="3.20.20.70">
    <property type="entry name" value="Aldolase class I"/>
    <property type="match status" value="1"/>
</dbReference>
<dbReference type="HAMAP" id="MF_00418">
    <property type="entry name" value="DapA"/>
    <property type="match status" value="1"/>
</dbReference>
<dbReference type="InterPro" id="IPR013785">
    <property type="entry name" value="Aldolase_TIM"/>
</dbReference>
<dbReference type="InterPro" id="IPR005263">
    <property type="entry name" value="DapA"/>
</dbReference>
<dbReference type="InterPro" id="IPR002220">
    <property type="entry name" value="DapA-like"/>
</dbReference>
<dbReference type="InterPro" id="IPR020625">
    <property type="entry name" value="Schiff_base-form_aldolases_AS"/>
</dbReference>
<dbReference type="NCBIfam" id="TIGR00674">
    <property type="entry name" value="dapA"/>
    <property type="match status" value="1"/>
</dbReference>
<dbReference type="PANTHER" id="PTHR12128:SF66">
    <property type="entry name" value="4-HYDROXY-2-OXOGLUTARATE ALDOLASE, MITOCHONDRIAL"/>
    <property type="match status" value="1"/>
</dbReference>
<dbReference type="PANTHER" id="PTHR12128">
    <property type="entry name" value="DIHYDRODIPICOLINATE SYNTHASE"/>
    <property type="match status" value="1"/>
</dbReference>
<dbReference type="Pfam" id="PF00701">
    <property type="entry name" value="DHDPS"/>
    <property type="match status" value="1"/>
</dbReference>
<dbReference type="PIRSF" id="PIRSF001365">
    <property type="entry name" value="DHDPS"/>
    <property type="match status" value="1"/>
</dbReference>
<dbReference type="PRINTS" id="PR00146">
    <property type="entry name" value="DHPICSNTHASE"/>
</dbReference>
<dbReference type="SMART" id="SM01130">
    <property type="entry name" value="DHDPS"/>
    <property type="match status" value="1"/>
</dbReference>
<dbReference type="SUPFAM" id="SSF51569">
    <property type="entry name" value="Aldolase"/>
    <property type="match status" value="1"/>
</dbReference>
<dbReference type="PROSITE" id="PS00666">
    <property type="entry name" value="DHDPS_2"/>
    <property type="match status" value="1"/>
</dbReference>
<sequence>MTHLFEGVGVALTTPFTNNKVNIEALKTHVNFLLENNAQAIIVNGTTAESPTLTTDEKERILKTVIDLVDKRVPVIAGTGTNDTEKSIQASIQAKALGADAIMLITPYYNKTNQRGLVKHFEAIADAVKLPVVLYNVPSRTNMTIEPETVEILSQHPYIVALKDATNDFEYLEEVKKRIDTNSFALYSGNDDNVVEYYQRGGQGVISVIANVIPKEFQALYDAQQSGLDIQDQFKPIGTLLSALSVDINPIPIKALTSYLGFGNYELRLPLVSLEDTDTKVLRETYDTFKAGENE</sequence>
<organism>
    <name type="scientific">Staphylococcus aureus (strain USA300 / TCH1516)</name>
    <dbReference type="NCBI Taxonomy" id="451516"/>
    <lineage>
        <taxon>Bacteria</taxon>
        <taxon>Bacillati</taxon>
        <taxon>Bacillota</taxon>
        <taxon>Bacilli</taxon>
        <taxon>Bacillales</taxon>
        <taxon>Staphylococcaceae</taxon>
        <taxon>Staphylococcus</taxon>
    </lineage>
</organism>
<keyword id="KW-0028">Amino-acid biosynthesis</keyword>
<keyword id="KW-0963">Cytoplasm</keyword>
<keyword id="KW-0220">Diaminopimelate biosynthesis</keyword>
<keyword id="KW-0456">Lyase</keyword>
<keyword id="KW-0457">Lysine biosynthesis</keyword>
<keyword id="KW-0704">Schiff base</keyword>
<evidence type="ECO:0000255" key="1">
    <source>
        <dbReference type="HAMAP-Rule" id="MF_00418"/>
    </source>
</evidence>
<evidence type="ECO:0000305" key="2"/>
<name>DAPA_STAAT</name>